<accession>Q9LVN7</accession>
<accession>A0MA44</accession>
<protein>
    <recommendedName>
        <fullName>DNA polymerase delta catalytic subunit</fullName>
        <ecNumber>2.7.7.7</ecNumber>
    </recommendedName>
    <alternativeName>
        <fullName>Protein EMBRYO DEFECTIVE 2780</fullName>
    </alternativeName>
</protein>
<name>DPOD1_ARATH</name>
<comment type="function">
    <text>This polymerase possesses two enzymatic activities: DNA synthesis (polymerase) and an exonucleolytic activity that degrades single-stranded DNA in the 3'- to 5'-direction.</text>
</comment>
<comment type="catalytic activity">
    <reaction>
        <text>DNA(n) + a 2'-deoxyribonucleoside 5'-triphosphate = DNA(n+1) + diphosphate</text>
        <dbReference type="Rhea" id="RHEA:22508"/>
        <dbReference type="Rhea" id="RHEA-COMP:17339"/>
        <dbReference type="Rhea" id="RHEA-COMP:17340"/>
        <dbReference type="ChEBI" id="CHEBI:33019"/>
        <dbReference type="ChEBI" id="CHEBI:61560"/>
        <dbReference type="ChEBI" id="CHEBI:173112"/>
        <dbReference type="EC" id="2.7.7.7"/>
    </reaction>
</comment>
<comment type="cofactor">
    <cofactor evidence="1">
        <name>[4Fe-4S] cluster</name>
        <dbReference type="ChEBI" id="CHEBI:49883"/>
    </cofactor>
    <text evidence="1">Binds 1 [4Fe-4S] cluster.</text>
</comment>
<comment type="subunit">
    <text evidence="1">Heterodimer with subunits of 125 kDa and 50 kDa. The 125 kDa subunit contains the polymerase active site and most likely the active site for the 3'-5' exonuclease activity (By similarity).</text>
</comment>
<comment type="subcellular location">
    <subcellularLocation>
        <location>Nucleus</location>
    </subcellularLocation>
</comment>
<comment type="alternative products">
    <event type="alternative splicing"/>
    <isoform>
        <id>Q9LVN7-1</id>
        <name>1</name>
        <sequence type="displayed"/>
    </isoform>
    <text>A number of isoforms are produced. According to EST sequences.</text>
</comment>
<comment type="domain">
    <text evidence="1">The CysB motif binds 1 4Fe-4S cluster and is required for the formation of polymerase complexes.</text>
</comment>
<comment type="miscellaneous">
    <text>In eukaryotes there are five DNA polymerases: alpha, beta, gamma, delta, and epsilon which are responsible for different reactions of DNA synthesis.</text>
</comment>
<comment type="similarity">
    <text evidence="3">Belongs to the DNA polymerase type-B family.</text>
</comment>
<comment type="sequence caution" evidence="3">
    <conflict type="erroneous gene model prediction">
        <sequence resource="EMBL-CDS" id="BAA96899"/>
    </conflict>
</comment>
<evidence type="ECO:0000250" key="1"/>
<evidence type="ECO:0000256" key="2">
    <source>
        <dbReference type="SAM" id="MobiDB-lite"/>
    </source>
</evidence>
<evidence type="ECO:0000305" key="3"/>
<feature type="chain" id="PRO_0000046449" description="DNA polymerase delta catalytic subunit">
    <location>
        <begin position="1"/>
        <end position="1095"/>
    </location>
</feature>
<feature type="zinc finger region" description="CysA-type">
    <location>
        <begin position="1007"/>
        <end position="1023"/>
    </location>
</feature>
<feature type="region of interest" description="Disordered" evidence="2">
    <location>
        <begin position="1"/>
        <end position="37"/>
    </location>
</feature>
<feature type="short sequence motif" description="CysB motif">
    <location>
        <begin position="1052"/>
        <end position="1070"/>
    </location>
</feature>
<feature type="compositionally biased region" description="Basic residues" evidence="2">
    <location>
        <begin position="1"/>
        <end position="11"/>
    </location>
</feature>
<feature type="binding site" evidence="1">
    <location>
        <position position="1007"/>
    </location>
    <ligand>
        <name>Zn(2+)</name>
        <dbReference type="ChEBI" id="CHEBI:29105"/>
    </ligand>
</feature>
<feature type="binding site" evidence="1">
    <location>
        <position position="1010"/>
    </location>
    <ligand>
        <name>Zn(2+)</name>
        <dbReference type="ChEBI" id="CHEBI:29105"/>
    </ligand>
</feature>
<feature type="binding site" evidence="1">
    <location>
        <position position="1020"/>
    </location>
    <ligand>
        <name>Zn(2+)</name>
        <dbReference type="ChEBI" id="CHEBI:29105"/>
    </ligand>
</feature>
<feature type="binding site" evidence="1">
    <location>
        <position position="1023"/>
    </location>
    <ligand>
        <name>Zn(2+)</name>
        <dbReference type="ChEBI" id="CHEBI:29105"/>
    </ligand>
</feature>
<feature type="binding site" evidence="1">
    <location>
        <position position="1052"/>
    </location>
    <ligand>
        <name>[4Fe-4S] cluster</name>
        <dbReference type="ChEBI" id="CHEBI:49883"/>
    </ligand>
</feature>
<feature type="binding site" evidence="1">
    <location>
        <position position="1055"/>
    </location>
    <ligand>
        <name>[4Fe-4S] cluster</name>
        <dbReference type="ChEBI" id="CHEBI:49883"/>
    </ligand>
</feature>
<feature type="binding site" evidence="1">
    <location>
        <position position="1065"/>
    </location>
    <ligand>
        <name>[4Fe-4S] cluster</name>
        <dbReference type="ChEBI" id="CHEBI:49883"/>
    </ligand>
</feature>
<feature type="binding site" evidence="1">
    <location>
        <position position="1070"/>
    </location>
    <ligand>
        <name>[4Fe-4S] cluster</name>
        <dbReference type="ChEBI" id="CHEBI:49883"/>
    </ligand>
</feature>
<sequence length="1095" mass="123236">MNRSGISKKRPPPSNTPPPAGKHRATGDSTPSPAIGTLDDEFMMEEDVFLDETLLYGDEDEESLILRDIEERESRSSAWARPPLSPAYLSNSQSIIFQQLEIDSIIAESHKELLPGSSGQAPIIRMFGVTREGNSVCCFVHGFEPYFYIACPPGMGPDDISNFHQSLEGRMRESNKNAKVPKFVKRIEMVQKRSIMYYQQQKSQTFLKITVALPTMVASCRGILDRGLQIDGLGMKSFQTYESNILFVLRFMVDCDIVGGNWIEVPTGKYKKNARTLSYCQLEFHCLYSDLISHAAEGEYSKMAPFRVLSFDIECAGRKGHFPEAKHDPVIQIANLVTLQGEDHPFVRNVMTLKSCAPIVGVDVMSFETEREVLLAWRDLIRDVDPDIIIGYNICKFDLPYLIERAATLGIEEFPLLGRVKNSRVRVRDSTFSSRQQGIRESKETTIEGRFQFDLIQAIHRDHKLSSYSLNSVSAHFLSEQKEDVHHSIITDLQNGNAETRRRLAVYCLKDAYLPQRLLDKLMFIYNYVEMARVTGVPISFLLARGQSIKVLSQLLRKGKQKNLVLPNAKQSGSEQGTYEGATVLEARTGFYEKPIATLDFASLYPSIMMAYNLCYCTLVTPEDVRKLNLPPEHVTKTPSGETFVKQTLQKGILPEILEELLTARKRAKADLKEAKDPLEKAVLDGRQLALKISANSVYGFTGATVGQLPCLEISSSVTSYGRQMIEQTKKLVEDKFTTLGGYQYNAEVIYGDTDSVMVQFGVSDVEAAMTLGREAAEHISGTFIKPIKLEFEKVYFPYLLINKKRYAGLLWTNPQQFDKMDTKGIETVRRDNCLLVKNLVTESLNKILIDRDVPGAAENVKKTISDLLMNRIDLSLLVITKGLTKTGDDYEVKSAHGELAERMRKRDAATAPNVGDRVPYVIIKAAKGAKAYERSEDPIYVLQNNIPIDPNYYLENQISKPLLRIFEPVLKNASKELLHGSHTRSISITTPSNSGIMKFAKKQLSCVGCKVPISNGTLCASCKGREAELYCKNVSQVAELEEVFGRLWTQCQECQGSLHQDVLCTSRDCPIFYRRMKAQKDMAVARQQLDRWSF</sequence>
<gene>
    <name type="primary">POLD1</name>
    <name type="synonym">EMB2780</name>
    <name type="ordered locus">At5g63960</name>
    <name type="ORF">MBM17.6</name>
</gene>
<organism>
    <name type="scientific">Arabidopsis thaliana</name>
    <name type="common">Mouse-ear cress</name>
    <dbReference type="NCBI Taxonomy" id="3702"/>
    <lineage>
        <taxon>Eukaryota</taxon>
        <taxon>Viridiplantae</taxon>
        <taxon>Streptophyta</taxon>
        <taxon>Embryophyta</taxon>
        <taxon>Tracheophyta</taxon>
        <taxon>Spermatophyta</taxon>
        <taxon>Magnoliopsida</taxon>
        <taxon>eudicotyledons</taxon>
        <taxon>Gunneridae</taxon>
        <taxon>Pentapetalae</taxon>
        <taxon>rosids</taxon>
        <taxon>malvids</taxon>
        <taxon>Brassicales</taxon>
        <taxon>Brassicaceae</taxon>
        <taxon>Camelineae</taxon>
        <taxon>Arabidopsis</taxon>
    </lineage>
</organism>
<keyword id="KW-0004">4Fe-4S</keyword>
<keyword id="KW-0025">Alternative splicing</keyword>
<keyword id="KW-0235">DNA replication</keyword>
<keyword id="KW-0238">DNA-binding</keyword>
<keyword id="KW-0239">DNA-directed DNA polymerase</keyword>
<keyword id="KW-0269">Exonuclease</keyword>
<keyword id="KW-0378">Hydrolase</keyword>
<keyword id="KW-0408">Iron</keyword>
<keyword id="KW-0411">Iron-sulfur</keyword>
<keyword id="KW-0479">Metal-binding</keyword>
<keyword id="KW-0540">Nuclease</keyword>
<keyword id="KW-0548">Nucleotidyltransferase</keyword>
<keyword id="KW-0539">Nucleus</keyword>
<keyword id="KW-1185">Reference proteome</keyword>
<keyword id="KW-0808">Transferase</keyword>
<keyword id="KW-0862">Zinc</keyword>
<keyword id="KW-0863">Zinc-finger</keyword>
<proteinExistence type="evidence at transcript level"/>
<reference key="1">
    <citation type="journal article" date="2009" name="Plant Cell">
        <title>Replication stress leads to genome instabilities in Arabidopsis DNA polymerase delta mutants.</title>
        <authorList>
            <person name="Schuermann D."/>
            <person name="Fritsch O."/>
            <person name="Lucht J.M."/>
            <person name="Hohn B."/>
        </authorList>
    </citation>
    <scope>NUCLEOTIDE SEQUENCE [MRNA]</scope>
    <source>
        <strain>cv. Columbia</strain>
    </source>
</reference>
<reference key="2">
    <citation type="journal article" date="2000" name="DNA Res.">
        <title>Structural analysis of Arabidopsis thaliana chromosome 5. X. Sequence features of the regions of 3,076,755 bp covered by sixty P1 and TAC clones.</title>
        <authorList>
            <person name="Sato S."/>
            <person name="Nakamura Y."/>
            <person name="Kaneko T."/>
            <person name="Katoh T."/>
            <person name="Asamizu E."/>
            <person name="Kotani H."/>
            <person name="Tabata S."/>
        </authorList>
    </citation>
    <scope>NUCLEOTIDE SEQUENCE [LARGE SCALE GENOMIC DNA]</scope>
    <source>
        <strain>cv. Columbia</strain>
    </source>
</reference>
<reference key="3">
    <citation type="journal article" date="2017" name="Plant J.">
        <title>Araport11: a complete reannotation of the Arabidopsis thaliana reference genome.</title>
        <authorList>
            <person name="Cheng C.Y."/>
            <person name="Krishnakumar V."/>
            <person name="Chan A.P."/>
            <person name="Thibaud-Nissen F."/>
            <person name="Schobel S."/>
            <person name="Town C.D."/>
        </authorList>
    </citation>
    <scope>GENOME REANNOTATION</scope>
    <source>
        <strain>cv. Columbia</strain>
    </source>
</reference>
<dbReference type="EC" id="2.7.7.7"/>
<dbReference type="EMBL" id="AB019227">
    <property type="protein sequence ID" value="BAA96899.1"/>
    <property type="status" value="ALT_SEQ"/>
    <property type="molecule type" value="Genomic_DNA"/>
</dbReference>
<dbReference type="EMBL" id="CP002688">
    <property type="protein sequence ID" value="AED97821.1"/>
    <property type="molecule type" value="Genomic_DNA"/>
</dbReference>
<dbReference type="EMBL" id="DQ160246">
    <property type="protein sequence ID" value="ABA41487.1"/>
    <property type="molecule type" value="mRNA"/>
</dbReference>
<dbReference type="RefSeq" id="NP_201201.2">
    <molecule id="Q9LVN7-1"/>
    <property type="nucleotide sequence ID" value="NM_125792.2"/>
</dbReference>
<dbReference type="SMR" id="Q9LVN7"/>
<dbReference type="BioGRID" id="21759">
    <property type="interactions" value="4"/>
</dbReference>
<dbReference type="FunCoup" id="Q9LVN7">
    <property type="interactions" value="3609"/>
</dbReference>
<dbReference type="IntAct" id="Q9LVN7">
    <property type="interactions" value="2"/>
</dbReference>
<dbReference type="STRING" id="3702.Q9LVN7"/>
<dbReference type="PaxDb" id="3702-AT5G63960.2"/>
<dbReference type="ProteomicsDB" id="241250">
    <molecule id="Q9LVN7-1"/>
</dbReference>
<dbReference type="EnsemblPlants" id="AT5G63960.1">
    <molecule id="Q9LVN7-1"/>
    <property type="protein sequence ID" value="AT5G63960.1"/>
    <property type="gene ID" value="AT5G63960"/>
</dbReference>
<dbReference type="GeneID" id="836517"/>
<dbReference type="Gramene" id="AT5G63960.1">
    <molecule id="Q9LVN7-1"/>
    <property type="protein sequence ID" value="AT5G63960.1"/>
    <property type="gene ID" value="AT5G63960"/>
</dbReference>
<dbReference type="KEGG" id="ath:AT5G63960"/>
<dbReference type="Araport" id="AT5G63960"/>
<dbReference type="TAIR" id="AT5G63960">
    <property type="gene designation" value="GIS5"/>
</dbReference>
<dbReference type="eggNOG" id="KOG0969">
    <property type="taxonomic scope" value="Eukaryota"/>
</dbReference>
<dbReference type="InParanoid" id="Q9LVN7"/>
<dbReference type="OMA" id="CNNCRPR"/>
<dbReference type="PhylomeDB" id="Q9LVN7"/>
<dbReference type="BRENDA" id="2.7.7.7">
    <property type="organism ID" value="399"/>
</dbReference>
<dbReference type="CD-CODE" id="4299E36E">
    <property type="entry name" value="Nucleolus"/>
</dbReference>
<dbReference type="PRO" id="PR:Q9LVN7"/>
<dbReference type="Proteomes" id="UP000006548">
    <property type="component" value="Chromosome 5"/>
</dbReference>
<dbReference type="ExpressionAtlas" id="Q9LVN7">
    <property type="expression patterns" value="baseline and differential"/>
</dbReference>
<dbReference type="GO" id="GO:0043625">
    <property type="term" value="C:delta DNA polymerase complex"/>
    <property type="evidence" value="ECO:0007669"/>
    <property type="project" value="UniProtKB-ARBA"/>
</dbReference>
<dbReference type="GO" id="GO:0051539">
    <property type="term" value="F:4 iron, 4 sulfur cluster binding"/>
    <property type="evidence" value="ECO:0007669"/>
    <property type="project" value="UniProtKB-KW"/>
</dbReference>
<dbReference type="GO" id="GO:0003677">
    <property type="term" value="F:DNA binding"/>
    <property type="evidence" value="ECO:0007669"/>
    <property type="project" value="UniProtKB-KW"/>
</dbReference>
<dbReference type="GO" id="GO:0003887">
    <property type="term" value="F:DNA-directed DNA polymerase activity"/>
    <property type="evidence" value="ECO:0007669"/>
    <property type="project" value="UniProtKB-KW"/>
</dbReference>
<dbReference type="GO" id="GO:0004527">
    <property type="term" value="F:exonuclease activity"/>
    <property type="evidence" value="ECO:0007669"/>
    <property type="project" value="UniProtKB-KW"/>
</dbReference>
<dbReference type="GO" id="GO:0000166">
    <property type="term" value="F:nucleotide binding"/>
    <property type="evidence" value="ECO:0007669"/>
    <property type="project" value="InterPro"/>
</dbReference>
<dbReference type="GO" id="GO:0008270">
    <property type="term" value="F:zinc ion binding"/>
    <property type="evidence" value="ECO:0007669"/>
    <property type="project" value="UniProtKB-KW"/>
</dbReference>
<dbReference type="GO" id="GO:0006260">
    <property type="term" value="P:DNA replication"/>
    <property type="evidence" value="ECO:0007669"/>
    <property type="project" value="UniProtKB-KW"/>
</dbReference>
<dbReference type="CDD" id="cd05777">
    <property type="entry name" value="DNA_polB_delta_exo"/>
    <property type="match status" value="1"/>
</dbReference>
<dbReference type="CDD" id="cd05533">
    <property type="entry name" value="POLBc_delta"/>
    <property type="match status" value="1"/>
</dbReference>
<dbReference type="FunFam" id="1.10.132.60:FF:000001">
    <property type="entry name" value="DNA polymerase"/>
    <property type="match status" value="1"/>
</dbReference>
<dbReference type="FunFam" id="1.10.287.690:FF:000001">
    <property type="entry name" value="DNA polymerase"/>
    <property type="match status" value="1"/>
</dbReference>
<dbReference type="FunFam" id="3.30.342.10:FF:000007">
    <property type="entry name" value="DNA polymerase"/>
    <property type="match status" value="1"/>
</dbReference>
<dbReference type="FunFam" id="3.30.420.10:FF:000351">
    <property type="entry name" value="DNA polymerase"/>
    <property type="match status" value="1"/>
</dbReference>
<dbReference type="Gene3D" id="1.10.132.60">
    <property type="entry name" value="DNA polymerase family B, C-terminal domain"/>
    <property type="match status" value="1"/>
</dbReference>
<dbReference type="Gene3D" id="3.30.342.10">
    <property type="entry name" value="DNA Polymerase, chain B, domain 1"/>
    <property type="match status" value="1"/>
</dbReference>
<dbReference type="Gene3D" id="1.10.287.690">
    <property type="entry name" value="Helix hairpin bin"/>
    <property type="match status" value="1"/>
</dbReference>
<dbReference type="Gene3D" id="3.90.1600.10">
    <property type="entry name" value="Palm domain of DNA polymerase"/>
    <property type="match status" value="1"/>
</dbReference>
<dbReference type="Gene3D" id="3.30.420.10">
    <property type="entry name" value="Ribonuclease H-like superfamily/Ribonuclease H"/>
    <property type="match status" value="1"/>
</dbReference>
<dbReference type="InterPro" id="IPR006172">
    <property type="entry name" value="DNA-dir_DNA_pol_B"/>
</dbReference>
<dbReference type="InterPro" id="IPR017964">
    <property type="entry name" value="DNA-dir_DNA_pol_B_CS"/>
</dbReference>
<dbReference type="InterPro" id="IPR006133">
    <property type="entry name" value="DNA-dir_DNA_pol_B_exonuc"/>
</dbReference>
<dbReference type="InterPro" id="IPR006134">
    <property type="entry name" value="DNA-dir_DNA_pol_B_multi_dom"/>
</dbReference>
<dbReference type="InterPro" id="IPR043502">
    <property type="entry name" value="DNA/RNA_pol_sf"/>
</dbReference>
<dbReference type="InterPro" id="IPR042087">
    <property type="entry name" value="DNA_pol_B_thumb"/>
</dbReference>
<dbReference type="InterPro" id="IPR023211">
    <property type="entry name" value="DNA_pol_palm_dom_sf"/>
</dbReference>
<dbReference type="InterPro" id="IPR050240">
    <property type="entry name" value="DNA_pol_type-B"/>
</dbReference>
<dbReference type="InterPro" id="IPR056435">
    <property type="entry name" value="DPOD/Z_N"/>
</dbReference>
<dbReference type="InterPro" id="IPR012337">
    <property type="entry name" value="RNaseH-like_sf"/>
</dbReference>
<dbReference type="InterPro" id="IPR036397">
    <property type="entry name" value="RNaseH_sf"/>
</dbReference>
<dbReference type="InterPro" id="IPR025687">
    <property type="entry name" value="Znf-C4pol"/>
</dbReference>
<dbReference type="NCBIfam" id="TIGR00592">
    <property type="entry name" value="pol2"/>
    <property type="match status" value="1"/>
</dbReference>
<dbReference type="PANTHER" id="PTHR10322">
    <property type="entry name" value="DNA POLYMERASE CATALYTIC SUBUNIT"/>
    <property type="match status" value="1"/>
</dbReference>
<dbReference type="PANTHER" id="PTHR10322:SF23">
    <property type="entry name" value="DNA POLYMERASE DELTA CATALYTIC SUBUNIT"/>
    <property type="match status" value="1"/>
</dbReference>
<dbReference type="Pfam" id="PF00136">
    <property type="entry name" value="DNA_pol_B"/>
    <property type="match status" value="1"/>
</dbReference>
<dbReference type="Pfam" id="PF03104">
    <property type="entry name" value="DNA_pol_B_exo1"/>
    <property type="match status" value="1"/>
</dbReference>
<dbReference type="Pfam" id="PF24055">
    <property type="entry name" value="POL3_N"/>
    <property type="match status" value="1"/>
</dbReference>
<dbReference type="Pfam" id="PF14260">
    <property type="entry name" value="zf-C4pol"/>
    <property type="match status" value="1"/>
</dbReference>
<dbReference type="PRINTS" id="PR00106">
    <property type="entry name" value="DNAPOLB"/>
</dbReference>
<dbReference type="SMART" id="SM00486">
    <property type="entry name" value="POLBc"/>
    <property type="match status" value="1"/>
</dbReference>
<dbReference type="SUPFAM" id="SSF56672">
    <property type="entry name" value="DNA/RNA polymerases"/>
    <property type="match status" value="1"/>
</dbReference>
<dbReference type="SUPFAM" id="SSF53098">
    <property type="entry name" value="Ribonuclease H-like"/>
    <property type="match status" value="1"/>
</dbReference>
<dbReference type="PROSITE" id="PS00116">
    <property type="entry name" value="DNA_POLYMERASE_B"/>
    <property type="match status" value="1"/>
</dbReference>